<name>HLDE_YERPA</name>
<proteinExistence type="inferred from homology"/>
<organism>
    <name type="scientific">Yersinia pestis bv. Antiqua (strain Antiqua)</name>
    <dbReference type="NCBI Taxonomy" id="360102"/>
    <lineage>
        <taxon>Bacteria</taxon>
        <taxon>Pseudomonadati</taxon>
        <taxon>Pseudomonadota</taxon>
        <taxon>Gammaproteobacteria</taxon>
        <taxon>Enterobacterales</taxon>
        <taxon>Yersiniaceae</taxon>
        <taxon>Yersinia</taxon>
    </lineage>
</organism>
<dbReference type="EC" id="2.7.1.167" evidence="1"/>
<dbReference type="EC" id="2.7.7.70" evidence="1"/>
<dbReference type="EMBL" id="CP000308">
    <property type="protein sequence ID" value="ABG15098.1"/>
    <property type="molecule type" value="Genomic_DNA"/>
</dbReference>
<dbReference type="RefSeq" id="WP_002212193.1">
    <property type="nucleotide sequence ID" value="NZ_CP009906.1"/>
</dbReference>
<dbReference type="SMR" id="Q1C374"/>
<dbReference type="GeneID" id="57973970"/>
<dbReference type="KEGG" id="ypa:YPA_3136"/>
<dbReference type="UniPathway" id="UPA00356">
    <property type="reaction ID" value="UER00437"/>
</dbReference>
<dbReference type="UniPathway" id="UPA00356">
    <property type="reaction ID" value="UER00439"/>
</dbReference>
<dbReference type="Proteomes" id="UP000001971">
    <property type="component" value="Chromosome"/>
</dbReference>
<dbReference type="GO" id="GO:0005829">
    <property type="term" value="C:cytosol"/>
    <property type="evidence" value="ECO:0007669"/>
    <property type="project" value="TreeGrafter"/>
</dbReference>
<dbReference type="GO" id="GO:0005524">
    <property type="term" value="F:ATP binding"/>
    <property type="evidence" value="ECO:0007669"/>
    <property type="project" value="UniProtKB-UniRule"/>
</dbReference>
<dbReference type="GO" id="GO:0033785">
    <property type="term" value="F:heptose 7-phosphate kinase activity"/>
    <property type="evidence" value="ECO:0007669"/>
    <property type="project" value="UniProtKB-UniRule"/>
</dbReference>
<dbReference type="GO" id="GO:0033786">
    <property type="term" value="F:heptose-1-phosphate adenylyltransferase activity"/>
    <property type="evidence" value="ECO:0007669"/>
    <property type="project" value="UniProtKB-UniRule"/>
</dbReference>
<dbReference type="GO" id="GO:0016773">
    <property type="term" value="F:phosphotransferase activity, alcohol group as acceptor"/>
    <property type="evidence" value="ECO:0007669"/>
    <property type="project" value="InterPro"/>
</dbReference>
<dbReference type="GO" id="GO:0097171">
    <property type="term" value="P:ADP-L-glycero-beta-D-manno-heptose biosynthetic process"/>
    <property type="evidence" value="ECO:0007669"/>
    <property type="project" value="UniProtKB-UniPathway"/>
</dbReference>
<dbReference type="CDD" id="cd01172">
    <property type="entry name" value="RfaE_like"/>
    <property type="match status" value="1"/>
</dbReference>
<dbReference type="FunFam" id="3.40.1190.20:FF:000002">
    <property type="entry name" value="Bifunctional protein HldE"/>
    <property type="match status" value="1"/>
</dbReference>
<dbReference type="FunFam" id="3.40.50.620:FF:000028">
    <property type="entry name" value="Bifunctional protein HldE"/>
    <property type="match status" value="1"/>
</dbReference>
<dbReference type="Gene3D" id="3.40.1190.20">
    <property type="match status" value="1"/>
</dbReference>
<dbReference type="Gene3D" id="3.40.50.620">
    <property type="entry name" value="HUPs"/>
    <property type="match status" value="1"/>
</dbReference>
<dbReference type="HAMAP" id="MF_01603">
    <property type="entry name" value="HldE"/>
    <property type="match status" value="1"/>
</dbReference>
<dbReference type="InterPro" id="IPR023030">
    <property type="entry name" value="Bifunc_HldE"/>
</dbReference>
<dbReference type="InterPro" id="IPR002173">
    <property type="entry name" value="Carboh/pur_kinase_PfkB_CS"/>
</dbReference>
<dbReference type="InterPro" id="IPR004821">
    <property type="entry name" value="Cyt_trans-like"/>
</dbReference>
<dbReference type="InterPro" id="IPR011611">
    <property type="entry name" value="PfkB_dom"/>
</dbReference>
<dbReference type="InterPro" id="IPR011913">
    <property type="entry name" value="RfaE_dom_I"/>
</dbReference>
<dbReference type="InterPro" id="IPR011914">
    <property type="entry name" value="RfaE_dom_II"/>
</dbReference>
<dbReference type="InterPro" id="IPR029056">
    <property type="entry name" value="Ribokinase-like"/>
</dbReference>
<dbReference type="InterPro" id="IPR014729">
    <property type="entry name" value="Rossmann-like_a/b/a_fold"/>
</dbReference>
<dbReference type="NCBIfam" id="TIGR00125">
    <property type="entry name" value="cyt_tran_rel"/>
    <property type="match status" value="1"/>
</dbReference>
<dbReference type="NCBIfam" id="NF008454">
    <property type="entry name" value="PRK11316.1"/>
    <property type="match status" value="1"/>
</dbReference>
<dbReference type="NCBIfam" id="TIGR02198">
    <property type="entry name" value="rfaE_dom_I"/>
    <property type="match status" value="1"/>
</dbReference>
<dbReference type="NCBIfam" id="TIGR02199">
    <property type="entry name" value="rfaE_dom_II"/>
    <property type="match status" value="1"/>
</dbReference>
<dbReference type="PANTHER" id="PTHR46969">
    <property type="entry name" value="BIFUNCTIONAL PROTEIN HLDE"/>
    <property type="match status" value="1"/>
</dbReference>
<dbReference type="PANTHER" id="PTHR46969:SF1">
    <property type="entry name" value="BIFUNCTIONAL PROTEIN HLDE"/>
    <property type="match status" value="1"/>
</dbReference>
<dbReference type="Pfam" id="PF01467">
    <property type="entry name" value="CTP_transf_like"/>
    <property type="match status" value="1"/>
</dbReference>
<dbReference type="Pfam" id="PF00294">
    <property type="entry name" value="PfkB"/>
    <property type="match status" value="1"/>
</dbReference>
<dbReference type="SUPFAM" id="SSF52374">
    <property type="entry name" value="Nucleotidylyl transferase"/>
    <property type="match status" value="1"/>
</dbReference>
<dbReference type="SUPFAM" id="SSF53613">
    <property type="entry name" value="Ribokinase-like"/>
    <property type="match status" value="1"/>
</dbReference>
<dbReference type="PROSITE" id="PS00583">
    <property type="entry name" value="PFKB_KINASES_1"/>
    <property type="match status" value="1"/>
</dbReference>
<protein>
    <recommendedName>
        <fullName evidence="1">Bifunctional protein HldE</fullName>
    </recommendedName>
    <domain>
        <recommendedName>
            <fullName evidence="1">D-beta-D-heptose 7-phosphate kinase</fullName>
            <ecNumber evidence="1">2.7.1.167</ecNumber>
        </recommendedName>
        <alternativeName>
            <fullName evidence="1">D-beta-D-heptose 7-phosphotransferase</fullName>
        </alternativeName>
        <alternativeName>
            <fullName evidence="1">D-glycero-beta-D-manno-heptose-7-phosphate kinase</fullName>
        </alternativeName>
    </domain>
    <domain>
        <recommendedName>
            <fullName evidence="1">D-beta-D-heptose 1-phosphate adenylyltransferase</fullName>
            <ecNumber evidence="1">2.7.7.70</ecNumber>
        </recommendedName>
        <alternativeName>
            <fullName evidence="1">D-glycero-beta-D-manno-heptose 1-phosphate adenylyltransferase</fullName>
        </alternativeName>
    </domain>
</protein>
<feature type="chain" id="PRO_0000255789" description="Bifunctional protein HldE">
    <location>
        <begin position="1"/>
        <end position="476"/>
    </location>
</feature>
<feature type="region of interest" description="Ribokinase">
    <location>
        <begin position="1"/>
        <end position="318"/>
    </location>
</feature>
<feature type="region of interest" description="Cytidylyltransferase">
    <location>
        <begin position="344"/>
        <end position="476"/>
    </location>
</feature>
<feature type="active site" evidence="1">
    <location>
        <position position="264"/>
    </location>
</feature>
<feature type="binding site" evidence="1">
    <location>
        <begin position="195"/>
        <end position="198"/>
    </location>
    <ligand>
        <name>ATP</name>
        <dbReference type="ChEBI" id="CHEBI:30616"/>
    </ligand>
</feature>
<accession>Q1C374</accession>
<gene>
    <name evidence="1" type="primary">hldE</name>
    <name type="ordered locus">YPA_3136</name>
</gene>
<keyword id="KW-0067">ATP-binding</keyword>
<keyword id="KW-0119">Carbohydrate metabolism</keyword>
<keyword id="KW-0418">Kinase</keyword>
<keyword id="KW-0511">Multifunctional enzyme</keyword>
<keyword id="KW-0547">Nucleotide-binding</keyword>
<keyword id="KW-0548">Nucleotidyltransferase</keyword>
<keyword id="KW-0808">Transferase</keyword>
<comment type="function">
    <text evidence="1">Catalyzes the phosphorylation of D-glycero-D-manno-heptose 7-phosphate at the C-1 position to selectively form D-glycero-beta-D-manno-heptose-1,7-bisphosphate.</text>
</comment>
<comment type="function">
    <text evidence="1">Catalyzes the ADP transfer from ATP to D-glycero-beta-D-manno-heptose 1-phosphate, yielding ADP-D-glycero-beta-D-manno-heptose.</text>
</comment>
<comment type="catalytic activity">
    <reaction evidence="1">
        <text>D-glycero-beta-D-manno-heptose 7-phosphate + ATP = D-glycero-beta-D-manno-heptose 1,7-bisphosphate + ADP + H(+)</text>
        <dbReference type="Rhea" id="RHEA:27473"/>
        <dbReference type="ChEBI" id="CHEBI:15378"/>
        <dbReference type="ChEBI" id="CHEBI:30616"/>
        <dbReference type="ChEBI" id="CHEBI:60204"/>
        <dbReference type="ChEBI" id="CHEBI:60208"/>
        <dbReference type="ChEBI" id="CHEBI:456216"/>
        <dbReference type="EC" id="2.7.1.167"/>
    </reaction>
</comment>
<comment type="catalytic activity">
    <reaction evidence="1">
        <text>D-glycero-beta-D-manno-heptose 1-phosphate + ATP + H(+) = ADP-D-glycero-beta-D-manno-heptose + diphosphate</text>
        <dbReference type="Rhea" id="RHEA:27465"/>
        <dbReference type="ChEBI" id="CHEBI:15378"/>
        <dbReference type="ChEBI" id="CHEBI:30616"/>
        <dbReference type="ChEBI" id="CHEBI:33019"/>
        <dbReference type="ChEBI" id="CHEBI:59967"/>
        <dbReference type="ChEBI" id="CHEBI:61593"/>
        <dbReference type="EC" id="2.7.7.70"/>
    </reaction>
</comment>
<comment type="pathway">
    <text evidence="1">Nucleotide-sugar biosynthesis; ADP-L-glycero-beta-D-manno-heptose biosynthesis; ADP-L-glycero-beta-D-manno-heptose from D-glycero-beta-D-manno-heptose 7-phosphate: step 1/4.</text>
</comment>
<comment type="pathway">
    <text evidence="1">Nucleotide-sugar biosynthesis; ADP-L-glycero-beta-D-manno-heptose biosynthesis; ADP-L-glycero-beta-D-manno-heptose from D-glycero-beta-D-manno-heptose 7-phosphate: step 3/4.</text>
</comment>
<comment type="subunit">
    <text evidence="1">Homodimer.</text>
</comment>
<comment type="similarity">
    <text evidence="1">In the N-terminal section; belongs to the carbohydrate kinase PfkB family.</text>
</comment>
<comment type="similarity">
    <text evidence="1">In the C-terminal section; belongs to the cytidylyltransferase family.</text>
</comment>
<sequence>MKVTLPDFRRAGVLVVGDVMLDRYWYGPTCRISPEAPVPVVKVDTIEERPGGAANVAMNIASLGAVARLVGLTGIDDAARALICKLSEVRVRCDFVSVPTHPTITKLRVLSRNQQLIRLDFEEGFDGVDPTPIFERIQLALPQIGALVLSDYAKGALNSVQPMIQLARKANVPVLIDPKGSDFERYRGATLLTPNLSEFEAVVGRCKNEEELVNRGMQLVADFELSALLVTRSEQGMTLLQLGKPPLHLPTQAKEVFDVTGAGDTVIGVLAAALAAGNSLEESCFLANAAAGVVVGKLGTSTVSPIELENAIRGRAETGFGVMDEQQLKIAVAQARQRGEKVVMTNGIFDILHAGHVSYLANARKLGDRLIVAVNSDASTKRLKGEKRPVNPLEQRMVVLGALEAVDWVVPFEEDTPQRLIADILPDLLVKGGDYKPHEIAGSEEVWAAGGEVKVLNFEDGVSTTNIIQSIKNGRG</sequence>
<evidence type="ECO:0000255" key="1">
    <source>
        <dbReference type="HAMAP-Rule" id="MF_01603"/>
    </source>
</evidence>
<reference key="1">
    <citation type="journal article" date="2006" name="J. Bacteriol.">
        <title>Complete genome sequence of Yersinia pestis strains Antiqua and Nepal516: evidence of gene reduction in an emerging pathogen.</title>
        <authorList>
            <person name="Chain P.S.G."/>
            <person name="Hu P."/>
            <person name="Malfatti S.A."/>
            <person name="Radnedge L."/>
            <person name="Larimer F."/>
            <person name="Vergez L.M."/>
            <person name="Worsham P."/>
            <person name="Chu M.C."/>
            <person name="Andersen G.L."/>
        </authorList>
    </citation>
    <scope>NUCLEOTIDE SEQUENCE [LARGE SCALE GENOMIC DNA]</scope>
    <source>
        <strain>Antiqua</strain>
    </source>
</reference>